<protein>
    <recommendedName>
        <fullName>U1-lycotoxin-Ls1a</fullName>
    </recommendedName>
    <alternativeName>
        <fullName>Toxin-like structure LSTX-A10</fullName>
    </alternativeName>
    <alternativeName>
        <fullName>Toxin-like structure LSTX-A9</fullName>
    </alternativeName>
</protein>
<keyword id="KW-1015">Disulfide bond</keyword>
<keyword id="KW-0960">Knottin</keyword>
<keyword id="KW-0964">Secreted</keyword>
<keyword id="KW-0732">Signal</keyword>
<keyword id="KW-0800">Toxin</keyword>
<organism>
    <name type="scientific">Lycosa singoriensis</name>
    <name type="common">Wolf spider</name>
    <name type="synonym">Aranea singoriensis</name>
    <dbReference type="NCBI Taxonomy" id="434756"/>
    <lineage>
        <taxon>Eukaryota</taxon>
        <taxon>Metazoa</taxon>
        <taxon>Ecdysozoa</taxon>
        <taxon>Arthropoda</taxon>
        <taxon>Chelicerata</taxon>
        <taxon>Arachnida</taxon>
        <taxon>Araneae</taxon>
        <taxon>Araneomorphae</taxon>
        <taxon>Entelegynae</taxon>
        <taxon>Lycosoidea</taxon>
        <taxon>Lycosidae</taxon>
        <taxon>Lycosa</taxon>
    </lineage>
</organism>
<dbReference type="EMBL" id="EU925932">
    <property type="protein sequence ID" value="ACI41264.1"/>
    <property type="status" value="ALT_FRAME"/>
    <property type="molecule type" value="mRNA"/>
</dbReference>
<dbReference type="EMBL" id="EU925933">
    <property type="protein sequence ID" value="ACI41265.1"/>
    <property type="molecule type" value="mRNA"/>
</dbReference>
<dbReference type="EMBL" id="FM863937">
    <property type="protein sequence ID" value="CAS03535.1"/>
    <property type="molecule type" value="mRNA"/>
</dbReference>
<dbReference type="SMR" id="B6DCJ9"/>
<dbReference type="ArachnoServer" id="AS000883">
    <property type="toxin name" value="U1-lycotoxin-Ls1a"/>
</dbReference>
<dbReference type="GO" id="GO:0005576">
    <property type="term" value="C:extracellular region"/>
    <property type="evidence" value="ECO:0007669"/>
    <property type="project" value="UniProtKB-SubCell"/>
</dbReference>
<dbReference type="GO" id="GO:0090729">
    <property type="term" value="F:toxin activity"/>
    <property type="evidence" value="ECO:0007669"/>
    <property type="project" value="UniProtKB-KW"/>
</dbReference>
<dbReference type="InterPro" id="IPR019553">
    <property type="entry name" value="Spider_toxin_CSTX_knottin"/>
</dbReference>
<dbReference type="InterPro" id="IPR011142">
    <property type="entry name" value="Spider_toxin_CSTX_Knottin_CS"/>
</dbReference>
<dbReference type="Pfam" id="PF10530">
    <property type="entry name" value="Toxin_35"/>
    <property type="match status" value="1"/>
</dbReference>
<dbReference type="PROSITE" id="PS60029">
    <property type="entry name" value="SPIDER_CSTX"/>
    <property type="match status" value="1"/>
</dbReference>
<accession>B6DCJ9</accession>
<accession>B6DCJ8</accession>
<feature type="signal peptide" evidence="2">
    <location>
        <begin position="1"/>
        <end position="20"/>
    </location>
</feature>
<feature type="propeptide" id="PRO_0000401517" evidence="1">
    <location>
        <begin position="21"/>
        <end position="41"/>
    </location>
</feature>
<feature type="chain" id="PRO_0000401518" description="U1-lycotoxin-Ls1a">
    <location>
        <begin position="42"/>
        <end position="107"/>
    </location>
</feature>
<feature type="disulfide bond" evidence="1">
    <location>
        <begin position="44"/>
        <end position="59"/>
    </location>
</feature>
<feature type="disulfide bond" evidence="1">
    <location>
        <begin position="51"/>
        <end position="68"/>
    </location>
</feature>
<feature type="disulfide bond" evidence="1">
    <location>
        <begin position="58"/>
        <end position="86"/>
    </location>
</feature>
<feature type="disulfide bond" evidence="1">
    <location>
        <begin position="70"/>
        <end position="84"/>
    </location>
</feature>
<name>TX109_LYCSI</name>
<comment type="subcellular location">
    <subcellularLocation>
        <location evidence="1">Secreted</location>
    </subcellularLocation>
</comment>
<comment type="tissue specificity">
    <text>Expressed by the venom gland.</text>
</comment>
<comment type="domain">
    <text evidence="1">The presence of a 'disulfide through disulfide knot' structurally defines this protein as a knottin.</text>
</comment>
<comment type="similarity">
    <text evidence="3">Belongs to the neurotoxin 19 (CSTX) family. 04 (U1-Lctx) subfamily.</text>
</comment>
<comment type="sequence caution" evidence="3">
    <conflict type="frameshift">
        <sequence resource="EMBL-CDS" id="ACI41264"/>
    </conflict>
</comment>
<evidence type="ECO:0000250" key="1"/>
<evidence type="ECO:0000255" key="2"/>
<evidence type="ECO:0000305" key="3"/>
<sequence length="107" mass="11910">MMKVLVVVALLVTLISYSSSEGIDDLEADELLSLMANEQTRKECIPKHHECTSNKHGCCRGNFFKYKCRCTTVVTQDGEQTERCFCGTPPHHKAAELVVGFGKKIFG</sequence>
<reference key="1">
    <citation type="journal article" date="2010" name="Zoology">
        <title>Transcriptome analysis of the venom glands of the Chinese wolf spider Lycosa singoriensis.</title>
        <authorList>
            <person name="Zhang Y."/>
            <person name="Chen J."/>
            <person name="Tang X."/>
            <person name="Wang F."/>
            <person name="Jiang L."/>
            <person name="Xiong X."/>
            <person name="Wang M."/>
            <person name="Rong M."/>
            <person name="Liu Z."/>
            <person name="Liang S."/>
        </authorList>
    </citation>
    <scope>NUCLEOTIDE SEQUENCE [LARGE SCALE MRNA]</scope>
    <source>
        <tissue>Venom gland</tissue>
    </source>
</reference>
<proteinExistence type="evidence at transcript level"/>